<name>PURA_ALKEH</name>
<protein>
    <recommendedName>
        <fullName evidence="1">Adenylosuccinate synthetase</fullName>
        <shortName evidence="1">AMPSase</shortName>
        <shortName evidence="1">AdSS</shortName>
        <ecNumber evidence="1">6.3.4.4</ecNumber>
    </recommendedName>
    <alternativeName>
        <fullName evidence="1">IMP--aspartate ligase</fullName>
    </alternativeName>
</protein>
<proteinExistence type="inferred from homology"/>
<sequence>MAKNVVVVGSQWGDEGKGKVVDLLTEHTGAVVRFQGGHNAGHTLVIDGEQTILHLIPSGVLREGVQCLIGNGVVLAPDALLEEVQELEGKGVPARERLRISPACPLILPCHVALDKAREAARGQARIGTTGRGIGPAYEDKVSRRGIRVADLFHRERLAAKLGELLDYHNFVLQHYFHEQPIDFQDVLERCLTYADELRPMVADIGQLLQEHMDAGRDLLFEGAQGTLLDIDHGTYPFVTSSNTVAGAAATGTGIGPRDLHYVLGITKAYTTRVGSGPFPTELEDEIGDLLGERGREFGATTGRKRRCGWFDAVALRRAAQINSLSGLCITKLDVLDELETLRICIGYQCGDQLWESLPPGAELLADCEPQYIDLPGWQSSTLGVQQWDDLPENARAYLRKLEELIGVPVAIVSTGPDRKETIVLQNPFESA</sequence>
<organism>
    <name type="scientific">Alkalilimnicola ehrlichii (strain ATCC BAA-1101 / DSM 17681 / MLHE-1)</name>
    <dbReference type="NCBI Taxonomy" id="187272"/>
    <lineage>
        <taxon>Bacteria</taxon>
        <taxon>Pseudomonadati</taxon>
        <taxon>Pseudomonadota</taxon>
        <taxon>Gammaproteobacteria</taxon>
        <taxon>Chromatiales</taxon>
        <taxon>Ectothiorhodospiraceae</taxon>
        <taxon>Alkalilimnicola</taxon>
    </lineage>
</organism>
<keyword id="KW-0963">Cytoplasm</keyword>
<keyword id="KW-0342">GTP-binding</keyword>
<keyword id="KW-0436">Ligase</keyword>
<keyword id="KW-0460">Magnesium</keyword>
<keyword id="KW-0479">Metal-binding</keyword>
<keyword id="KW-0547">Nucleotide-binding</keyword>
<keyword id="KW-0658">Purine biosynthesis</keyword>
<keyword id="KW-1185">Reference proteome</keyword>
<dbReference type="EC" id="6.3.4.4" evidence="1"/>
<dbReference type="EMBL" id="CP000453">
    <property type="protein sequence ID" value="ABI55932.1"/>
    <property type="molecule type" value="Genomic_DNA"/>
</dbReference>
<dbReference type="RefSeq" id="WP_011628327.1">
    <property type="nucleotide sequence ID" value="NC_008340.1"/>
</dbReference>
<dbReference type="SMR" id="Q0AB55"/>
<dbReference type="KEGG" id="aeh:Mlg_0578"/>
<dbReference type="eggNOG" id="COG0104">
    <property type="taxonomic scope" value="Bacteria"/>
</dbReference>
<dbReference type="HOGENOM" id="CLU_029848_0_0_6"/>
<dbReference type="OrthoDB" id="9807553at2"/>
<dbReference type="UniPathway" id="UPA00075">
    <property type="reaction ID" value="UER00335"/>
</dbReference>
<dbReference type="Proteomes" id="UP000001962">
    <property type="component" value="Chromosome"/>
</dbReference>
<dbReference type="GO" id="GO:0005737">
    <property type="term" value="C:cytoplasm"/>
    <property type="evidence" value="ECO:0007669"/>
    <property type="project" value="UniProtKB-SubCell"/>
</dbReference>
<dbReference type="GO" id="GO:0004019">
    <property type="term" value="F:adenylosuccinate synthase activity"/>
    <property type="evidence" value="ECO:0007669"/>
    <property type="project" value="UniProtKB-UniRule"/>
</dbReference>
<dbReference type="GO" id="GO:0005525">
    <property type="term" value="F:GTP binding"/>
    <property type="evidence" value="ECO:0007669"/>
    <property type="project" value="UniProtKB-UniRule"/>
</dbReference>
<dbReference type="GO" id="GO:0000287">
    <property type="term" value="F:magnesium ion binding"/>
    <property type="evidence" value="ECO:0007669"/>
    <property type="project" value="UniProtKB-UniRule"/>
</dbReference>
<dbReference type="GO" id="GO:0044208">
    <property type="term" value="P:'de novo' AMP biosynthetic process"/>
    <property type="evidence" value="ECO:0007669"/>
    <property type="project" value="UniProtKB-UniRule"/>
</dbReference>
<dbReference type="GO" id="GO:0046040">
    <property type="term" value="P:IMP metabolic process"/>
    <property type="evidence" value="ECO:0007669"/>
    <property type="project" value="TreeGrafter"/>
</dbReference>
<dbReference type="CDD" id="cd03108">
    <property type="entry name" value="AdSS"/>
    <property type="match status" value="1"/>
</dbReference>
<dbReference type="FunFam" id="1.10.300.10:FF:000001">
    <property type="entry name" value="Adenylosuccinate synthetase"/>
    <property type="match status" value="1"/>
</dbReference>
<dbReference type="FunFam" id="3.90.170.10:FF:000001">
    <property type="entry name" value="Adenylosuccinate synthetase"/>
    <property type="match status" value="1"/>
</dbReference>
<dbReference type="Gene3D" id="3.40.440.10">
    <property type="entry name" value="Adenylosuccinate Synthetase, subunit A, domain 1"/>
    <property type="match status" value="1"/>
</dbReference>
<dbReference type="Gene3D" id="1.10.300.10">
    <property type="entry name" value="Adenylosuccinate Synthetase, subunit A, domain 2"/>
    <property type="match status" value="1"/>
</dbReference>
<dbReference type="Gene3D" id="3.90.170.10">
    <property type="entry name" value="Adenylosuccinate Synthetase, subunit A, domain 3"/>
    <property type="match status" value="1"/>
</dbReference>
<dbReference type="HAMAP" id="MF_00011">
    <property type="entry name" value="Adenylosucc_synth"/>
    <property type="match status" value="1"/>
</dbReference>
<dbReference type="InterPro" id="IPR018220">
    <property type="entry name" value="Adenylosuccin_syn_GTP-bd"/>
</dbReference>
<dbReference type="InterPro" id="IPR033128">
    <property type="entry name" value="Adenylosuccin_syn_Lys_AS"/>
</dbReference>
<dbReference type="InterPro" id="IPR042109">
    <property type="entry name" value="Adenylosuccinate_synth_dom1"/>
</dbReference>
<dbReference type="InterPro" id="IPR042110">
    <property type="entry name" value="Adenylosuccinate_synth_dom2"/>
</dbReference>
<dbReference type="InterPro" id="IPR042111">
    <property type="entry name" value="Adenylosuccinate_synth_dom3"/>
</dbReference>
<dbReference type="InterPro" id="IPR001114">
    <property type="entry name" value="Adenylosuccinate_synthetase"/>
</dbReference>
<dbReference type="InterPro" id="IPR027417">
    <property type="entry name" value="P-loop_NTPase"/>
</dbReference>
<dbReference type="NCBIfam" id="NF002223">
    <property type="entry name" value="PRK01117.1"/>
    <property type="match status" value="1"/>
</dbReference>
<dbReference type="NCBIfam" id="TIGR00184">
    <property type="entry name" value="purA"/>
    <property type="match status" value="1"/>
</dbReference>
<dbReference type="PANTHER" id="PTHR11846">
    <property type="entry name" value="ADENYLOSUCCINATE SYNTHETASE"/>
    <property type="match status" value="1"/>
</dbReference>
<dbReference type="PANTHER" id="PTHR11846:SF0">
    <property type="entry name" value="ADENYLOSUCCINATE SYNTHETASE"/>
    <property type="match status" value="1"/>
</dbReference>
<dbReference type="Pfam" id="PF00709">
    <property type="entry name" value="Adenylsucc_synt"/>
    <property type="match status" value="1"/>
</dbReference>
<dbReference type="SMART" id="SM00788">
    <property type="entry name" value="Adenylsucc_synt"/>
    <property type="match status" value="1"/>
</dbReference>
<dbReference type="SUPFAM" id="SSF52540">
    <property type="entry name" value="P-loop containing nucleoside triphosphate hydrolases"/>
    <property type="match status" value="1"/>
</dbReference>
<dbReference type="PROSITE" id="PS01266">
    <property type="entry name" value="ADENYLOSUCCIN_SYN_1"/>
    <property type="match status" value="1"/>
</dbReference>
<dbReference type="PROSITE" id="PS00513">
    <property type="entry name" value="ADENYLOSUCCIN_SYN_2"/>
    <property type="match status" value="1"/>
</dbReference>
<comment type="function">
    <text evidence="1">Plays an important role in the de novo pathway of purine nucleotide biosynthesis. Catalyzes the first committed step in the biosynthesis of AMP from IMP.</text>
</comment>
<comment type="catalytic activity">
    <reaction evidence="1">
        <text>IMP + L-aspartate + GTP = N(6)-(1,2-dicarboxyethyl)-AMP + GDP + phosphate + 2 H(+)</text>
        <dbReference type="Rhea" id="RHEA:15753"/>
        <dbReference type="ChEBI" id="CHEBI:15378"/>
        <dbReference type="ChEBI" id="CHEBI:29991"/>
        <dbReference type="ChEBI" id="CHEBI:37565"/>
        <dbReference type="ChEBI" id="CHEBI:43474"/>
        <dbReference type="ChEBI" id="CHEBI:57567"/>
        <dbReference type="ChEBI" id="CHEBI:58053"/>
        <dbReference type="ChEBI" id="CHEBI:58189"/>
        <dbReference type="EC" id="6.3.4.4"/>
    </reaction>
</comment>
<comment type="cofactor">
    <cofactor evidence="1">
        <name>Mg(2+)</name>
        <dbReference type="ChEBI" id="CHEBI:18420"/>
    </cofactor>
    <text evidence="1">Binds 1 Mg(2+) ion per subunit.</text>
</comment>
<comment type="pathway">
    <text evidence="1">Purine metabolism; AMP biosynthesis via de novo pathway; AMP from IMP: step 1/2.</text>
</comment>
<comment type="subunit">
    <text evidence="1">Homodimer.</text>
</comment>
<comment type="subcellular location">
    <subcellularLocation>
        <location evidence="1">Cytoplasm</location>
    </subcellularLocation>
</comment>
<comment type="similarity">
    <text evidence="1">Belongs to the adenylosuccinate synthetase family.</text>
</comment>
<accession>Q0AB55</accession>
<feature type="chain" id="PRO_1000000772" description="Adenylosuccinate synthetase">
    <location>
        <begin position="1"/>
        <end position="432"/>
    </location>
</feature>
<feature type="active site" description="Proton acceptor" evidence="1">
    <location>
        <position position="14"/>
    </location>
</feature>
<feature type="active site" description="Proton donor" evidence="1">
    <location>
        <position position="42"/>
    </location>
</feature>
<feature type="binding site" evidence="1">
    <location>
        <begin position="13"/>
        <end position="19"/>
    </location>
    <ligand>
        <name>GTP</name>
        <dbReference type="ChEBI" id="CHEBI:37565"/>
    </ligand>
</feature>
<feature type="binding site" description="in other chain" evidence="1">
    <location>
        <begin position="14"/>
        <end position="17"/>
    </location>
    <ligand>
        <name>IMP</name>
        <dbReference type="ChEBI" id="CHEBI:58053"/>
        <note>ligand shared between dimeric partners</note>
    </ligand>
</feature>
<feature type="binding site" evidence="1">
    <location>
        <position position="14"/>
    </location>
    <ligand>
        <name>Mg(2+)</name>
        <dbReference type="ChEBI" id="CHEBI:18420"/>
    </ligand>
</feature>
<feature type="binding site" description="in other chain" evidence="1">
    <location>
        <begin position="39"/>
        <end position="42"/>
    </location>
    <ligand>
        <name>IMP</name>
        <dbReference type="ChEBI" id="CHEBI:58053"/>
        <note>ligand shared between dimeric partners</note>
    </ligand>
</feature>
<feature type="binding site" evidence="1">
    <location>
        <begin position="41"/>
        <end position="43"/>
    </location>
    <ligand>
        <name>GTP</name>
        <dbReference type="ChEBI" id="CHEBI:37565"/>
    </ligand>
</feature>
<feature type="binding site" evidence="1">
    <location>
        <position position="41"/>
    </location>
    <ligand>
        <name>Mg(2+)</name>
        <dbReference type="ChEBI" id="CHEBI:18420"/>
    </ligand>
</feature>
<feature type="binding site" description="in other chain" evidence="1">
    <location>
        <position position="130"/>
    </location>
    <ligand>
        <name>IMP</name>
        <dbReference type="ChEBI" id="CHEBI:58053"/>
        <note>ligand shared between dimeric partners</note>
    </ligand>
</feature>
<feature type="binding site" evidence="1">
    <location>
        <position position="144"/>
    </location>
    <ligand>
        <name>IMP</name>
        <dbReference type="ChEBI" id="CHEBI:58053"/>
        <note>ligand shared between dimeric partners</note>
    </ligand>
</feature>
<feature type="binding site" description="in other chain" evidence="1">
    <location>
        <position position="225"/>
    </location>
    <ligand>
        <name>IMP</name>
        <dbReference type="ChEBI" id="CHEBI:58053"/>
        <note>ligand shared between dimeric partners</note>
    </ligand>
</feature>
<feature type="binding site" description="in other chain" evidence="1">
    <location>
        <position position="240"/>
    </location>
    <ligand>
        <name>IMP</name>
        <dbReference type="ChEBI" id="CHEBI:58053"/>
        <note>ligand shared between dimeric partners</note>
    </ligand>
</feature>
<feature type="binding site" evidence="1">
    <location>
        <begin position="300"/>
        <end position="306"/>
    </location>
    <ligand>
        <name>substrate</name>
    </ligand>
</feature>
<feature type="binding site" description="in other chain" evidence="1">
    <location>
        <position position="304"/>
    </location>
    <ligand>
        <name>IMP</name>
        <dbReference type="ChEBI" id="CHEBI:58053"/>
        <note>ligand shared between dimeric partners</note>
    </ligand>
</feature>
<feature type="binding site" evidence="1">
    <location>
        <position position="306"/>
    </location>
    <ligand>
        <name>GTP</name>
        <dbReference type="ChEBI" id="CHEBI:37565"/>
    </ligand>
</feature>
<feature type="binding site" evidence="1">
    <location>
        <begin position="332"/>
        <end position="334"/>
    </location>
    <ligand>
        <name>GTP</name>
        <dbReference type="ChEBI" id="CHEBI:37565"/>
    </ligand>
</feature>
<feature type="binding site" evidence="1">
    <location>
        <begin position="414"/>
        <end position="416"/>
    </location>
    <ligand>
        <name>GTP</name>
        <dbReference type="ChEBI" id="CHEBI:37565"/>
    </ligand>
</feature>
<evidence type="ECO:0000255" key="1">
    <source>
        <dbReference type="HAMAP-Rule" id="MF_00011"/>
    </source>
</evidence>
<reference key="1">
    <citation type="submission" date="2006-08" db="EMBL/GenBank/DDBJ databases">
        <title>Complete sequence of Alkalilimnicola ehrilichei MLHE-1.</title>
        <authorList>
            <person name="Copeland A."/>
            <person name="Lucas S."/>
            <person name="Lapidus A."/>
            <person name="Barry K."/>
            <person name="Detter J.C."/>
            <person name="Glavina del Rio T."/>
            <person name="Hammon N."/>
            <person name="Israni S."/>
            <person name="Dalin E."/>
            <person name="Tice H."/>
            <person name="Pitluck S."/>
            <person name="Sims D."/>
            <person name="Brettin T."/>
            <person name="Bruce D."/>
            <person name="Han C."/>
            <person name="Tapia R."/>
            <person name="Gilna P."/>
            <person name="Schmutz J."/>
            <person name="Larimer F."/>
            <person name="Land M."/>
            <person name="Hauser L."/>
            <person name="Kyrpides N."/>
            <person name="Mikhailova N."/>
            <person name="Oremland R.S."/>
            <person name="Hoeft S.E."/>
            <person name="Switzer-Blum J."/>
            <person name="Kulp T."/>
            <person name="King G."/>
            <person name="Tabita R."/>
            <person name="Witte B."/>
            <person name="Santini J.M."/>
            <person name="Basu P."/>
            <person name="Hollibaugh J.T."/>
            <person name="Xie G."/>
            <person name="Stolz J.F."/>
            <person name="Richardson P."/>
        </authorList>
    </citation>
    <scope>NUCLEOTIDE SEQUENCE [LARGE SCALE GENOMIC DNA]</scope>
    <source>
        <strain>ATCC BAA-1101 / DSM 17681 / MLHE-1</strain>
    </source>
</reference>
<gene>
    <name evidence="1" type="primary">purA</name>
    <name type="ordered locus">Mlg_0578</name>
</gene>